<dbReference type="EC" id="6.1.1.10" evidence="1"/>
<dbReference type="EMBL" id="CP001392">
    <property type="protein sequence ID" value="ACM34240.1"/>
    <property type="molecule type" value="Genomic_DNA"/>
</dbReference>
<dbReference type="RefSeq" id="WP_015914122.1">
    <property type="nucleotide sequence ID" value="NC_011992.1"/>
</dbReference>
<dbReference type="SMR" id="B9MEX0"/>
<dbReference type="KEGG" id="dia:Dtpsy_2806"/>
<dbReference type="eggNOG" id="COG0073">
    <property type="taxonomic scope" value="Bacteria"/>
</dbReference>
<dbReference type="eggNOG" id="COG0143">
    <property type="taxonomic scope" value="Bacteria"/>
</dbReference>
<dbReference type="HOGENOM" id="CLU_009710_7_0_4"/>
<dbReference type="Proteomes" id="UP000000450">
    <property type="component" value="Chromosome"/>
</dbReference>
<dbReference type="GO" id="GO:0005829">
    <property type="term" value="C:cytosol"/>
    <property type="evidence" value="ECO:0007669"/>
    <property type="project" value="TreeGrafter"/>
</dbReference>
<dbReference type="GO" id="GO:0005524">
    <property type="term" value="F:ATP binding"/>
    <property type="evidence" value="ECO:0007669"/>
    <property type="project" value="UniProtKB-UniRule"/>
</dbReference>
<dbReference type="GO" id="GO:0046872">
    <property type="term" value="F:metal ion binding"/>
    <property type="evidence" value="ECO:0007669"/>
    <property type="project" value="UniProtKB-KW"/>
</dbReference>
<dbReference type="GO" id="GO:0004825">
    <property type="term" value="F:methionine-tRNA ligase activity"/>
    <property type="evidence" value="ECO:0007669"/>
    <property type="project" value="UniProtKB-UniRule"/>
</dbReference>
<dbReference type="GO" id="GO:0000049">
    <property type="term" value="F:tRNA binding"/>
    <property type="evidence" value="ECO:0007669"/>
    <property type="project" value="UniProtKB-KW"/>
</dbReference>
<dbReference type="GO" id="GO:0006431">
    <property type="term" value="P:methionyl-tRNA aminoacylation"/>
    <property type="evidence" value="ECO:0007669"/>
    <property type="project" value="UniProtKB-UniRule"/>
</dbReference>
<dbReference type="CDD" id="cd07957">
    <property type="entry name" value="Anticodon_Ia_Met"/>
    <property type="match status" value="1"/>
</dbReference>
<dbReference type="CDD" id="cd00814">
    <property type="entry name" value="MetRS_core"/>
    <property type="match status" value="1"/>
</dbReference>
<dbReference type="CDD" id="cd02800">
    <property type="entry name" value="tRNA_bind_EcMetRS_like"/>
    <property type="match status" value="1"/>
</dbReference>
<dbReference type="FunFam" id="2.20.28.20:FF:000001">
    <property type="entry name" value="Methionine--tRNA ligase"/>
    <property type="match status" value="1"/>
</dbReference>
<dbReference type="FunFam" id="2.40.50.140:FF:000042">
    <property type="entry name" value="Methionine--tRNA ligase"/>
    <property type="match status" value="1"/>
</dbReference>
<dbReference type="Gene3D" id="3.40.50.620">
    <property type="entry name" value="HUPs"/>
    <property type="match status" value="1"/>
</dbReference>
<dbReference type="Gene3D" id="1.10.730.10">
    <property type="entry name" value="Isoleucyl-tRNA Synthetase, Domain 1"/>
    <property type="match status" value="1"/>
</dbReference>
<dbReference type="Gene3D" id="2.20.28.20">
    <property type="entry name" value="Methionyl-tRNA synthetase, Zn-domain"/>
    <property type="match status" value="1"/>
</dbReference>
<dbReference type="Gene3D" id="2.40.50.140">
    <property type="entry name" value="Nucleic acid-binding proteins"/>
    <property type="match status" value="1"/>
</dbReference>
<dbReference type="HAMAP" id="MF_00098">
    <property type="entry name" value="Met_tRNA_synth_type1"/>
    <property type="match status" value="1"/>
</dbReference>
<dbReference type="InterPro" id="IPR001412">
    <property type="entry name" value="aa-tRNA-synth_I_CS"/>
</dbReference>
<dbReference type="InterPro" id="IPR041872">
    <property type="entry name" value="Anticodon_Met"/>
</dbReference>
<dbReference type="InterPro" id="IPR004495">
    <property type="entry name" value="Met-tRNA-synth_bsu_C"/>
</dbReference>
<dbReference type="InterPro" id="IPR023458">
    <property type="entry name" value="Met-tRNA_ligase_1"/>
</dbReference>
<dbReference type="InterPro" id="IPR014758">
    <property type="entry name" value="Met-tRNA_synth"/>
</dbReference>
<dbReference type="InterPro" id="IPR015413">
    <property type="entry name" value="Methionyl/Leucyl_tRNA_Synth"/>
</dbReference>
<dbReference type="InterPro" id="IPR033911">
    <property type="entry name" value="MetRS_core"/>
</dbReference>
<dbReference type="InterPro" id="IPR029038">
    <property type="entry name" value="MetRS_Zn"/>
</dbReference>
<dbReference type="InterPro" id="IPR012340">
    <property type="entry name" value="NA-bd_OB-fold"/>
</dbReference>
<dbReference type="InterPro" id="IPR014729">
    <property type="entry name" value="Rossmann-like_a/b/a_fold"/>
</dbReference>
<dbReference type="InterPro" id="IPR002547">
    <property type="entry name" value="tRNA-bd_dom"/>
</dbReference>
<dbReference type="InterPro" id="IPR009080">
    <property type="entry name" value="tRNAsynth_Ia_anticodon-bd"/>
</dbReference>
<dbReference type="NCBIfam" id="TIGR00398">
    <property type="entry name" value="metG"/>
    <property type="match status" value="1"/>
</dbReference>
<dbReference type="NCBIfam" id="TIGR00399">
    <property type="entry name" value="metG_C_term"/>
    <property type="match status" value="1"/>
</dbReference>
<dbReference type="NCBIfam" id="NF001100">
    <property type="entry name" value="PRK00133.1"/>
    <property type="match status" value="1"/>
</dbReference>
<dbReference type="PANTHER" id="PTHR45765">
    <property type="entry name" value="METHIONINE--TRNA LIGASE"/>
    <property type="match status" value="1"/>
</dbReference>
<dbReference type="PANTHER" id="PTHR45765:SF1">
    <property type="entry name" value="METHIONINE--TRNA LIGASE, CYTOPLASMIC"/>
    <property type="match status" value="1"/>
</dbReference>
<dbReference type="Pfam" id="PF19303">
    <property type="entry name" value="Anticodon_3"/>
    <property type="match status" value="1"/>
</dbReference>
<dbReference type="Pfam" id="PF09334">
    <property type="entry name" value="tRNA-synt_1g"/>
    <property type="match status" value="1"/>
</dbReference>
<dbReference type="Pfam" id="PF01588">
    <property type="entry name" value="tRNA_bind"/>
    <property type="match status" value="1"/>
</dbReference>
<dbReference type="PRINTS" id="PR01041">
    <property type="entry name" value="TRNASYNTHMET"/>
</dbReference>
<dbReference type="SUPFAM" id="SSF47323">
    <property type="entry name" value="Anticodon-binding domain of a subclass of class I aminoacyl-tRNA synthetases"/>
    <property type="match status" value="1"/>
</dbReference>
<dbReference type="SUPFAM" id="SSF57770">
    <property type="entry name" value="Methionyl-tRNA synthetase (MetRS), Zn-domain"/>
    <property type="match status" value="1"/>
</dbReference>
<dbReference type="SUPFAM" id="SSF50249">
    <property type="entry name" value="Nucleic acid-binding proteins"/>
    <property type="match status" value="1"/>
</dbReference>
<dbReference type="SUPFAM" id="SSF52374">
    <property type="entry name" value="Nucleotidylyl transferase"/>
    <property type="match status" value="1"/>
</dbReference>
<dbReference type="PROSITE" id="PS00178">
    <property type="entry name" value="AA_TRNA_LIGASE_I"/>
    <property type="match status" value="1"/>
</dbReference>
<dbReference type="PROSITE" id="PS50886">
    <property type="entry name" value="TRBD"/>
    <property type="match status" value="1"/>
</dbReference>
<sequence length="688" mass="76610">MTARKIFVTTALPYANGNFHIGHIMEYIQADTWVRAQRMQGNAVNFVGADDAHGAPIMIAAEKAGKTPQQFVADIAAGRKQYLDGFHIAFDNWSNTDSPENHELSQQIYLDLKAAGFIETRTIEQFFDPEKNMFLPDRFIKGECPRCHAKDQYGDNCEVCSSVYAPTDLINPYSALSGAKPVLKTSEHFFFKLSDPRAVEFLTEWTQNGQHVQPEVAAKIKEWFGTRTNPDGTTSEGLDDWDISRDAPYFGIEIPDAPGKYFYVWLDAPVGYLASLKNLLNKRGEDYDAYMADPQLEQYHFIGKDIITFHTLFWPAMLKFSGRKTPTKICVHGFMTVNNGEKMSKSRGTGLDPLKYLALGMNPEWLRYYLGAKLNGKNEDIDFNPEDFMARVNSDLIGKYVNIASRAAGFIFKRFGGKLGEVSADGQALLAQLREQAGPIVAAYEARDTARAVRETMLLCDRVNSYVDANKPWELAKQEGMEARLQDVCTTCIEAFRILTIYLKPILPQVAAEVARFLIVPPEQFAEVAQPLGAGHQIGQYQHLMQRVTQEQLDALFEPPAPAVEKVIPGGEEIAPTITIDDFAKVDLRIAKIVKCEAVEGSTKLLRLTLDAGEGQTRNVFSGIASMYKPEDLQGKLTVMVANLAPRKMKFGLSEGMVLAASHADEKAHPGIFVLEPFPGAQPGMRIH</sequence>
<comment type="function">
    <text evidence="1">Is required not only for elongation of protein synthesis but also for the initiation of all mRNA translation through initiator tRNA(fMet) aminoacylation.</text>
</comment>
<comment type="catalytic activity">
    <reaction evidence="1">
        <text>tRNA(Met) + L-methionine + ATP = L-methionyl-tRNA(Met) + AMP + diphosphate</text>
        <dbReference type="Rhea" id="RHEA:13481"/>
        <dbReference type="Rhea" id="RHEA-COMP:9667"/>
        <dbReference type="Rhea" id="RHEA-COMP:9698"/>
        <dbReference type="ChEBI" id="CHEBI:30616"/>
        <dbReference type="ChEBI" id="CHEBI:33019"/>
        <dbReference type="ChEBI" id="CHEBI:57844"/>
        <dbReference type="ChEBI" id="CHEBI:78442"/>
        <dbReference type="ChEBI" id="CHEBI:78530"/>
        <dbReference type="ChEBI" id="CHEBI:456215"/>
        <dbReference type="EC" id="6.1.1.10"/>
    </reaction>
</comment>
<comment type="cofactor">
    <cofactor evidence="1">
        <name>Zn(2+)</name>
        <dbReference type="ChEBI" id="CHEBI:29105"/>
    </cofactor>
    <text evidence="1">Binds 1 zinc ion per subunit.</text>
</comment>
<comment type="subunit">
    <text evidence="1">Homodimer.</text>
</comment>
<comment type="subcellular location">
    <subcellularLocation>
        <location evidence="1">Cytoplasm</location>
    </subcellularLocation>
</comment>
<comment type="similarity">
    <text evidence="1">Belongs to the class-I aminoacyl-tRNA synthetase family. MetG type 1 subfamily.</text>
</comment>
<protein>
    <recommendedName>
        <fullName evidence="1">Methionine--tRNA ligase</fullName>
        <ecNumber evidence="1">6.1.1.10</ecNumber>
    </recommendedName>
    <alternativeName>
        <fullName evidence="1">Methionyl-tRNA synthetase</fullName>
        <shortName evidence="1">MetRS</shortName>
    </alternativeName>
</protein>
<keyword id="KW-0030">Aminoacyl-tRNA synthetase</keyword>
<keyword id="KW-0067">ATP-binding</keyword>
<keyword id="KW-0963">Cytoplasm</keyword>
<keyword id="KW-0436">Ligase</keyword>
<keyword id="KW-0479">Metal-binding</keyword>
<keyword id="KW-0547">Nucleotide-binding</keyword>
<keyword id="KW-0648">Protein biosynthesis</keyword>
<keyword id="KW-1185">Reference proteome</keyword>
<keyword id="KW-0694">RNA-binding</keyword>
<keyword id="KW-0820">tRNA-binding</keyword>
<keyword id="KW-0862">Zinc</keyword>
<proteinExistence type="inferred from homology"/>
<name>SYM_ACIET</name>
<organism>
    <name type="scientific">Acidovorax ebreus (strain TPSY)</name>
    <name type="common">Diaphorobacter sp. (strain TPSY)</name>
    <dbReference type="NCBI Taxonomy" id="535289"/>
    <lineage>
        <taxon>Bacteria</taxon>
        <taxon>Pseudomonadati</taxon>
        <taxon>Pseudomonadota</taxon>
        <taxon>Betaproteobacteria</taxon>
        <taxon>Burkholderiales</taxon>
        <taxon>Comamonadaceae</taxon>
        <taxon>Diaphorobacter</taxon>
    </lineage>
</organism>
<feature type="chain" id="PRO_1000118730" description="Methionine--tRNA ligase">
    <location>
        <begin position="1"/>
        <end position="688"/>
    </location>
</feature>
<feature type="domain" description="tRNA-binding" evidence="1">
    <location>
        <begin position="582"/>
        <end position="688"/>
    </location>
</feature>
<feature type="short sequence motif" description="'HIGH' region">
    <location>
        <begin position="13"/>
        <end position="23"/>
    </location>
</feature>
<feature type="short sequence motif" description="'KMSKS' region">
    <location>
        <begin position="342"/>
        <end position="346"/>
    </location>
</feature>
<feature type="binding site" evidence="1">
    <location>
        <position position="144"/>
    </location>
    <ligand>
        <name>Zn(2+)</name>
        <dbReference type="ChEBI" id="CHEBI:29105"/>
    </ligand>
</feature>
<feature type="binding site" evidence="1">
    <location>
        <position position="147"/>
    </location>
    <ligand>
        <name>Zn(2+)</name>
        <dbReference type="ChEBI" id="CHEBI:29105"/>
    </ligand>
</feature>
<feature type="binding site" evidence="1">
    <location>
        <position position="157"/>
    </location>
    <ligand>
        <name>Zn(2+)</name>
        <dbReference type="ChEBI" id="CHEBI:29105"/>
    </ligand>
</feature>
<feature type="binding site" evidence="1">
    <location>
        <position position="160"/>
    </location>
    <ligand>
        <name>Zn(2+)</name>
        <dbReference type="ChEBI" id="CHEBI:29105"/>
    </ligand>
</feature>
<feature type="binding site" evidence="1">
    <location>
        <position position="345"/>
    </location>
    <ligand>
        <name>ATP</name>
        <dbReference type="ChEBI" id="CHEBI:30616"/>
    </ligand>
</feature>
<accession>B9MEX0</accession>
<reference key="1">
    <citation type="submission" date="2009-01" db="EMBL/GenBank/DDBJ databases">
        <title>Complete sequence of Diaphorobacter sp. TPSY.</title>
        <authorList>
            <consortium name="US DOE Joint Genome Institute"/>
            <person name="Lucas S."/>
            <person name="Copeland A."/>
            <person name="Lapidus A."/>
            <person name="Glavina del Rio T."/>
            <person name="Tice H."/>
            <person name="Bruce D."/>
            <person name="Goodwin L."/>
            <person name="Pitluck S."/>
            <person name="Chertkov O."/>
            <person name="Brettin T."/>
            <person name="Detter J.C."/>
            <person name="Han C."/>
            <person name="Larimer F."/>
            <person name="Land M."/>
            <person name="Hauser L."/>
            <person name="Kyrpides N."/>
            <person name="Mikhailova N."/>
            <person name="Coates J.D."/>
        </authorList>
    </citation>
    <scope>NUCLEOTIDE SEQUENCE [LARGE SCALE GENOMIC DNA]</scope>
    <source>
        <strain>TPSY</strain>
    </source>
</reference>
<gene>
    <name evidence="1" type="primary">metG</name>
    <name type="ordered locus">Dtpsy_2806</name>
</gene>
<evidence type="ECO:0000255" key="1">
    <source>
        <dbReference type="HAMAP-Rule" id="MF_00098"/>
    </source>
</evidence>